<keyword id="KW-0560">Oxidoreductase</keyword>
<keyword id="KW-0819">tRNA processing</keyword>
<name>TRHO_FRATW</name>
<comment type="function">
    <text evidence="1">Catalyzes oxygen-dependent 5-hydroxyuridine (ho5U) modification at position 34 in tRNAs.</text>
</comment>
<comment type="catalytic activity">
    <reaction evidence="1">
        <text>uridine(34) in tRNA + AH2 + O2 = 5-hydroxyuridine(34) in tRNA + A + H2O</text>
        <dbReference type="Rhea" id="RHEA:64224"/>
        <dbReference type="Rhea" id="RHEA-COMP:11727"/>
        <dbReference type="Rhea" id="RHEA-COMP:13381"/>
        <dbReference type="ChEBI" id="CHEBI:13193"/>
        <dbReference type="ChEBI" id="CHEBI:15377"/>
        <dbReference type="ChEBI" id="CHEBI:15379"/>
        <dbReference type="ChEBI" id="CHEBI:17499"/>
        <dbReference type="ChEBI" id="CHEBI:65315"/>
        <dbReference type="ChEBI" id="CHEBI:136877"/>
    </reaction>
</comment>
<comment type="similarity">
    <text evidence="1">Belongs to the TrhO family.</text>
</comment>
<evidence type="ECO:0000255" key="1">
    <source>
        <dbReference type="HAMAP-Rule" id="MF_00469"/>
    </source>
</evidence>
<evidence type="ECO:0000256" key="2">
    <source>
        <dbReference type="SAM" id="MobiDB-lite"/>
    </source>
</evidence>
<feature type="chain" id="PRO_1000013743" description="tRNA uridine(34) hydroxylase">
    <location>
        <begin position="1"/>
        <end position="332"/>
    </location>
</feature>
<feature type="domain" description="Rhodanese" evidence="1">
    <location>
        <begin position="127"/>
        <end position="221"/>
    </location>
</feature>
<feature type="region of interest" description="Disordered" evidence="2">
    <location>
        <begin position="308"/>
        <end position="332"/>
    </location>
</feature>
<feature type="compositionally biased region" description="Basic and acidic residues" evidence="2">
    <location>
        <begin position="321"/>
        <end position="332"/>
    </location>
</feature>
<feature type="active site" description="Cysteine persulfide intermediate" evidence="1">
    <location>
        <position position="181"/>
    </location>
</feature>
<proteinExistence type="inferred from homology"/>
<reference key="1">
    <citation type="journal article" date="2007" name="PLoS ONE">
        <title>Complete genomic characterization of a pathogenic A.II strain of Francisella tularensis subspecies tularensis.</title>
        <authorList>
            <person name="Beckstrom-Sternberg S.M."/>
            <person name="Auerbach R.K."/>
            <person name="Godbole S."/>
            <person name="Pearson J.V."/>
            <person name="Beckstrom-Sternberg J.S."/>
            <person name="Deng Z."/>
            <person name="Munk C."/>
            <person name="Kubota K."/>
            <person name="Zhou Y."/>
            <person name="Bruce D."/>
            <person name="Noronha J."/>
            <person name="Scheuermann R.H."/>
            <person name="Wang A."/>
            <person name="Wei X."/>
            <person name="Wang J."/>
            <person name="Hao J."/>
            <person name="Wagner D.M."/>
            <person name="Brettin T.S."/>
            <person name="Brown N."/>
            <person name="Gilna P."/>
            <person name="Keim P.S."/>
        </authorList>
    </citation>
    <scope>NUCLEOTIDE SEQUENCE [LARGE SCALE GENOMIC DNA]</scope>
    <source>
        <strain>WY96-3418</strain>
    </source>
</reference>
<sequence length="332" mass="38226">MGIYMSQIVVCAMYKFVTLEDFEAMRQPLLDTMIKNNVKGTLLLANEGINGTVAGTRESIDNLLAYLKADPRLVDIDYKESYHQEMPFYRSKVKLKKEIVTLGIDEIDPNKICGKYVEPKDWNDLISDPETVLIDTRNEYEIEIGTFKNAINPHTENFREFPQYVDENLDPKKHKKVAMFCTGGIRCEKSTALLKAKGFDEVYHLKGGILKYLEEVPKEKSMWQGECFVFDSRVAVNHDLEKGNYDQCFACRMPITEDDKKRPEYVKGISCHHCYDKVTEKQKARFAEREKQSQLAAEKGFSHVGDEAKKLAQLNKQKKQQAKEAARKKAQQ</sequence>
<protein>
    <recommendedName>
        <fullName evidence="1">tRNA uridine(34) hydroxylase</fullName>
        <ecNumber evidence="1">1.14.-.-</ecNumber>
    </recommendedName>
    <alternativeName>
        <fullName evidence="1">tRNA hydroxylation protein O</fullName>
    </alternativeName>
</protein>
<dbReference type="EC" id="1.14.-.-" evidence="1"/>
<dbReference type="EMBL" id="CP000608">
    <property type="protein sequence ID" value="ABO47141.1"/>
    <property type="molecule type" value="Genomic_DNA"/>
</dbReference>
<dbReference type="SMR" id="A4IYZ0"/>
<dbReference type="KEGG" id="ftw:FTW_1391"/>
<dbReference type="HOGENOM" id="CLU_038878_0_0_6"/>
<dbReference type="GO" id="GO:0016705">
    <property type="term" value="F:oxidoreductase activity, acting on paired donors, with incorporation or reduction of molecular oxygen"/>
    <property type="evidence" value="ECO:0007669"/>
    <property type="project" value="UniProtKB-UniRule"/>
</dbReference>
<dbReference type="GO" id="GO:0006400">
    <property type="term" value="P:tRNA modification"/>
    <property type="evidence" value="ECO:0007669"/>
    <property type="project" value="UniProtKB-UniRule"/>
</dbReference>
<dbReference type="CDD" id="cd01518">
    <property type="entry name" value="RHOD_YceA"/>
    <property type="match status" value="1"/>
</dbReference>
<dbReference type="Gene3D" id="3.30.70.100">
    <property type="match status" value="1"/>
</dbReference>
<dbReference type="Gene3D" id="3.40.250.10">
    <property type="entry name" value="Rhodanese-like domain"/>
    <property type="match status" value="1"/>
</dbReference>
<dbReference type="HAMAP" id="MF_00469">
    <property type="entry name" value="TrhO"/>
    <property type="match status" value="1"/>
</dbReference>
<dbReference type="InterPro" id="IPR001763">
    <property type="entry name" value="Rhodanese-like_dom"/>
</dbReference>
<dbReference type="InterPro" id="IPR036873">
    <property type="entry name" value="Rhodanese-like_dom_sf"/>
</dbReference>
<dbReference type="InterPro" id="IPR020936">
    <property type="entry name" value="TrhO"/>
</dbReference>
<dbReference type="InterPro" id="IPR040503">
    <property type="entry name" value="TRHO_N"/>
</dbReference>
<dbReference type="NCBIfam" id="NF001136">
    <property type="entry name" value="PRK00142.1-4"/>
    <property type="match status" value="1"/>
</dbReference>
<dbReference type="PANTHER" id="PTHR43268:SF3">
    <property type="entry name" value="RHODANESE-LIKE DOMAIN-CONTAINING PROTEIN 7-RELATED"/>
    <property type="match status" value="1"/>
</dbReference>
<dbReference type="PANTHER" id="PTHR43268">
    <property type="entry name" value="THIOSULFATE SULFURTRANSFERASE/RHODANESE-LIKE DOMAIN-CONTAINING PROTEIN 2"/>
    <property type="match status" value="1"/>
</dbReference>
<dbReference type="Pfam" id="PF00581">
    <property type="entry name" value="Rhodanese"/>
    <property type="match status" value="1"/>
</dbReference>
<dbReference type="Pfam" id="PF17773">
    <property type="entry name" value="UPF0176_N"/>
    <property type="match status" value="1"/>
</dbReference>
<dbReference type="SMART" id="SM00450">
    <property type="entry name" value="RHOD"/>
    <property type="match status" value="1"/>
</dbReference>
<dbReference type="SUPFAM" id="SSF52821">
    <property type="entry name" value="Rhodanese/Cell cycle control phosphatase"/>
    <property type="match status" value="1"/>
</dbReference>
<dbReference type="PROSITE" id="PS50206">
    <property type="entry name" value="RHODANESE_3"/>
    <property type="match status" value="1"/>
</dbReference>
<organism>
    <name type="scientific">Francisella tularensis subsp. tularensis (strain WY96-3418)</name>
    <dbReference type="NCBI Taxonomy" id="418136"/>
    <lineage>
        <taxon>Bacteria</taxon>
        <taxon>Pseudomonadati</taxon>
        <taxon>Pseudomonadota</taxon>
        <taxon>Gammaproteobacteria</taxon>
        <taxon>Thiotrichales</taxon>
        <taxon>Francisellaceae</taxon>
        <taxon>Francisella</taxon>
    </lineage>
</organism>
<gene>
    <name evidence="1" type="primary">trhO</name>
    <name type="ordered locus">FTW_1391</name>
</gene>
<accession>A4IYZ0</accession>